<evidence type="ECO:0000255" key="1"/>
<evidence type="ECO:0000305" key="2"/>
<dbReference type="EMBL" id="L77117">
    <property type="protein sequence ID" value="AAB98088.1"/>
    <property type="molecule type" value="Genomic_DNA"/>
</dbReference>
<dbReference type="PIR" id="B64313">
    <property type="entry name" value="B64313"/>
</dbReference>
<dbReference type="SMR" id="Q57570"/>
<dbReference type="FunCoup" id="Q57570">
    <property type="interactions" value="3"/>
</dbReference>
<dbReference type="STRING" id="243232.MJ_0106"/>
<dbReference type="PaxDb" id="243232-MJ_0106"/>
<dbReference type="DNASU" id="1450947"/>
<dbReference type="EnsemblBacteria" id="AAB98088">
    <property type="protein sequence ID" value="AAB98088"/>
    <property type="gene ID" value="MJ_0106"/>
</dbReference>
<dbReference type="KEGG" id="mja:MJ_0106"/>
<dbReference type="eggNOG" id="arCOG00347">
    <property type="taxonomic scope" value="Archaea"/>
</dbReference>
<dbReference type="HOGENOM" id="CLU_075000_0_0_2"/>
<dbReference type="InParanoid" id="Q57570"/>
<dbReference type="PhylomeDB" id="Q57570"/>
<dbReference type="Proteomes" id="UP000000805">
    <property type="component" value="Chromosome"/>
</dbReference>
<dbReference type="GO" id="GO:0005886">
    <property type="term" value="C:plasma membrane"/>
    <property type="evidence" value="ECO:0007669"/>
    <property type="project" value="UniProtKB-SubCell"/>
</dbReference>
<dbReference type="Gene3D" id="3.40.50.10900">
    <property type="entry name" value="PAC-like subunit"/>
    <property type="match status" value="1"/>
</dbReference>
<dbReference type="InterPro" id="IPR004425">
    <property type="entry name" value="MJ0106-like"/>
</dbReference>
<dbReference type="InterPro" id="IPR019151">
    <property type="entry name" value="Proteasome_assmbl_chaperone_2"/>
</dbReference>
<dbReference type="InterPro" id="IPR038389">
    <property type="entry name" value="PSMG2_sf"/>
</dbReference>
<dbReference type="NCBIfam" id="TIGR00161">
    <property type="entry name" value="proteasome assembly chaperone family protein"/>
    <property type="match status" value="1"/>
</dbReference>
<dbReference type="PANTHER" id="PTHR35610:SF8">
    <property type="entry name" value="3-ISOPROPYLMALATE DEHYDRATASE"/>
    <property type="match status" value="1"/>
</dbReference>
<dbReference type="PANTHER" id="PTHR35610">
    <property type="entry name" value="3-ISOPROPYLMALATE DEHYDRATASE-RELATED"/>
    <property type="match status" value="1"/>
</dbReference>
<dbReference type="Pfam" id="PF09754">
    <property type="entry name" value="PAC2"/>
    <property type="match status" value="1"/>
</dbReference>
<dbReference type="SUPFAM" id="SSF159659">
    <property type="entry name" value="Cgl1923-like"/>
    <property type="match status" value="1"/>
</dbReference>
<sequence length="238" mass="26473">MVDSMKFVEKAKIEFENPIVIEAFPGTGLVGSIAGFQIIKDLNLKYFGYFEVDGILPLTTIEKGIPYPPVRAYANKDFIILFSDIIISPFKINGLAEFIVKTFSNKNPKLFVSLGGIMAGKSEKVFGIANKEELIEDLKNYVEIFDFGVVGGMGGNLLIKCHDNGFDAIGLLAETVGIRPDPRGGANLLEVLNKMFNLNVNIENLIKEAEAIENKLKELAEQHLKMMSKSRKEYPMYI</sequence>
<accession>Q57570</accession>
<comment type="subcellular location">
    <subcellularLocation>
        <location evidence="2">Cell membrane</location>
        <topology evidence="2">Multi-pass membrane protein</topology>
    </subcellularLocation>
</comment>
<gene>
    <name type="ordered locus">MJ0106</name>
</gene>
<proteinExistence type="predicted"/>
<protein>
    <recommendedName>
        <fullName>Uncharacterized protein MJ0106</fullName>
    </recommendedName>
</protein>
<name>Y106_METJA</name>
<feature type="chain" id="PRO_0000106695" description="Uncharacterized protein MJ0106">
    <location>
        <begin position="1"/>
        <end position="238"/>
    </location>
</feature>
<feature type="transmembrane region" description="Helical" evidence="1">
    <location>
        <begin position="19"/>
        <end position="39"/>
    </location>
</feature>
<feature type="transmembrane region" description="Helical" evidence="1">
    <location>
        <begin position="79"/>
        <end position="99"/>
    </location>
</feature>
<feature type="transmembrane region" description="Helical" evidence="1">
    <location>
        <begin position="141"/>
        <end position="161"/>
    </location>
</feature>
<reference key="1">
    <citation type="journal article" date="1996" name="Science">
        <title>Complete genome sequence of the methanogenic archaeon, Methanococcus jannaschii.</title>
        <authorList>
            <person name="Bult C.J."/>
            <person name="White O."/>
            <person name="Olsen G.J."/>
            <person name="Zhou L."/>
            <person name="Fleischmann R.D."/>
            <person name="Sutton G.G."/>
            <person name="Blake J.A."/>
            <person name="FitzGerald L.M."/>
            <person name="Clayton R.A."/>
            <person name="Gocayne J.D."/>
            <person name="Kerlavage A.R."/>
            <person name="Dougherty B.A."/>
            <person name="Tomb J.-F."/>
            <person name="Adams M.D."/>
            <person name="Reich C.I."/>
            <person name="Overbeek R."/>
            <person name="Kirkness E.F."/>
            <person name="Weinstock K.G."/>
            <person name="Merrick J.M."/>
            <person name="Glodek A."/>
            <person name="Scott J.L."/>
            <person name="Geoghagen N.S.M."/>
            <person name="Weidman J.F."/>
            <person name="Fuhrmann J.L."/>
            <person name="Nguyen D."/>
            <person name="Utterback T.R."/>
            <person name="Kelley J.M."/>
            <person name="Peterson J.D."/>
            <person name="Sadow P.W."/>
            <person name="Hanna M.C."/>
            <person name="Cotton M.D."/>
            <person name="Roberts K.M."/>
            <person name="Hurst M.A."/>
            <person name="Kaine B.P."/>
            <person name="Borodovsky M."/>
            <person name="Klenk H.-P."/>
            <person name="Fraser C.M."/>
            <person name="Smith H.O."/>
            <person name="Woese C.R."/>
            <person name="Venter J.C."/>
        </authorList>
    </citation>
    <scope>NUCLEOTIDE SEQUENCE [LARGE SCALE GENOMIC DNA]</scope>
    <source>
        <strain>ATCC 43067 / DSM 2661 / JAL-1 / JCM 10045 / NBRC 100440</strain>
    </source>
</reference>
<keyword id="KW-1003">Cell membrane</keyword>
<keyword id="KW-0472">Membrane</keyword>
<keyword id="KW-1185">Reference proteome</keyword>
<keyword id="KW-0812">Transmembrane</keyword>
<keyword id="KW-1133">Transmembrane helix</keyword>
<organism>
    <name type="scientific">Methanocaldococcus jannaschii (strain ATCC 43067 / DSM 2661 / JAL-1 / JCM 10045 / NBRC 100440)</name>
    <name type="common">Methanococcus jannaschii</name>
    <dbReference type="NCBI Taxonomy" id="243232"/>
    <lineage>
        <taxon>Archaea</taxon>
        <taxon>Methanobacteriati</taxon>
        <taxon>Methanobacteriota</taxon>
        <taxon>Methanomada group</taxon>
        <taxon>Methanococci</taxon>
        <taxon>Methanococcales</taxon>
        <taxon>Methanocaldococcaceae</taxon>
        <taxon>Methanocaldococcus</taxon>
    </lineage>
</organism>